<protein>
    <recommendedName>
        <fullName evidence="1">Thymidine kinase</fullName>
        <ecNumber evidence="1">2.7.1.21</ecNumber>
    </recommendedName>
</protein>
<keyword id="KW-0067">ATP-binding</keyword>
<keyword id="KW-0963">Cytoplasm</keyword>
<keyword id="KW-0237">DNA synthesis</keyword>
<keyword id="KW-0418">Kinase</keyword>
<keyword id="KW-0479">Metal-binding</keyword>
<keyword id="KW-0547">Nucleotide-binding</keyword>
<keyword id="KW-0808">Transferase</keyword>
<keyword id="KW-0862">Zinc</keyword>
<gene>
    <name evidence="1" type="primary">tdk</name>
    <name type="ordered locus">BCA_5479</name>
</gene>
<feature type="chain" id="PRO_1000122651" description="Thymidine kinase">
    <location>
        <begin position="1"/>
        <end position="195"/>
    </location>
</feature>
<feature type="active site" description="Proton acceptor" evidence="1">
    <location>
        <position position="89"/>
    </location>
</feature>
<feature type="binding site" evidence="1">
    <location>
        <begin position="15"/>
        <end position="22"/>
    </location>
    <ligand>
        <name>ATP</name>
        <dbReference type="ChEBI" id="CHEBI:30616"/>
    </ligand>
</feature>
<feature type="binding site" evidence="1">
    <location>
        <begin position="88"/>
        <end position="91"/>
    </location>
    <ligand>
        <name>ATP</name>
        <dbReference type="ChEBI" id="CHEBI:30616"/>
    </ligand>
</feature>
<feature type="binding site" evidence="1">
    <location>
        <position position="145"/>
    </location>
    <ligand>
        <name>Zn(2+)</name>
        <dbReference type="ChEBI" id="CHEBI:29105"/>
    </ligand>
</feature>
<feature type="binding site" evidence="1">
    <location>
        <position position="148"/>
    </location>
    <ligand>
        <name>Zn(2+)</name>
        <dbReference type="ChEBI" id="CHEBI:29105"/>
    </ligand>
</feature>
<feature type="binding site" evidence="1">
    <location>
        <position position="183"/>
    </location>
    <ligand>
        <name>Zn(2+)</name>
        <dbReference type="ChEBI" id="CHEBI:29105"/>
    </ligand>
</feature>
<feature type="binding site" evidence="1">
    <location>
        <position position="186"/>
    </location>
    <ligand>
        <name>Zn(2+)</name>
        <dbReference type="ChEBI" id="CHEBI:29105"/>
    </ligand>
</feature>
<name>KITH_BACC3</name>
<evidence type="ECO:0000255" key="1">
    <source>
        <dbReference type="HAMAP-Rule" id="MF_00124"/>
    </source>
</evidence>
<accession>C1F0Q7</accession>
<reference key="1">
    <citation type="submission" date="2009-02" db="EMBL/GenBank/DDBJ databases">
        <title>Genome sequence of Bacillus cereus 03BB102.</title>
        <authorList>
            <person name="Dodson R.J."/>
            <person name="Jackson P."/>
            <person name="Munk A.C."/>
            <person name="Brettin T."/>
            <person name="Bruce D."/>
            <person name="Detter C."/>
            <person name="Tapia R."/>
            <person name="Han C."/>
            <person name="Sutton G."/>
            <person name="Sims D."/>
        </authorList>
    </citation>
    <scope>NUCLEOTIDE SEQUENCE [LARGE SCALE GENOMIC DNA]</scope>
    <source>
        <strain>03BB102</strain>
    </source>
</reference>
<comment type="catalytic activity">
    <reaction evidence="1">
        <text>thymidine + ATP = dTMP + ADP + H(+)</text>
        <dbReference type="Rhea" id="RHEA:19129"/>
        <dbReference type="ChEBI" id="CHEBI:15378"/>
        <dbReference type="ChEBI" id="CHEBI:17748"/>
        <dbReference type="ChEBI" id="CHEBI:30616"/>
        <dbReference type="ChEBI" id="CHEBI:63528"/>
        <dbReference type="ChEBI" id="CHEBI:456216"/>
        <dbReference type="EC" id="2.7.1.21"/>
    </reaction>
</comment>
<comment type="subunit">
    <text evidence="1">Homotetramer.</text>
</comment>
<comment type="subcellular location">
    <subcellularLocation>
        <location evidence="1">Cytoplasm</location>
    </subcellularLocation>
</comment>
<comment type="similarity">
    <text evidence="1">Belongs to the thymidine kinase family.</text>
</comment>
<dbReference type="EC" id="2.7.1.21" evidence="1"/>
<dbReference type="EMBL" id="CP001407">
    <property type="protein sequence ID" value="ACO28529.1"/>
    <property type="molecule type" value="Genomic_DNA"/>
</dbReference>
<dbReference type="RefSeq" id="WP_000280864.1">
    <property type="nucleotide sequence ID" value="NZ_CP009318.1"/>
</dbReference>
<dbReference type="SMR" id="C1F0Q7"/>
<dbReference type="KEGG" id="bcx:BCA_5479"/>
<dbReference type="PATRIC" id="fig|572264.18.peg.5401"/>
<dbReference type="Proteomes" id="UP000002210">
    <property type="component" value="Chromosome"/>
</dbReference>
<dbReference type="GO" id="GO:0005829">
    <property type="term" value="C:cytosol"/>
    <property type="evidence" value="ECO:0007669"/>
    <property type="project" value="TreeGrafter"/>
</dbReference>
<dbReference type="GO" id="GO:0005524">
    <property type="term" value="F:ATP binding"/>
    <property type="evidence" value="ECO:0007669"/>
    <property type="project" value="UniProtKB-UniRule"/>
</dbReference>
<dbReference type="GO" id="GO:0004797">
    <property type="term" value="F:thymidine kinase activity"/>
    <property type="evidence" value="ECO:0007669"/>
    <property type="project" value="UniProtKB-UniRule"/>
</dbReference>
<dbReference type="GO" id="GO:0008270">
    <property type="term" value="F:zinc ion binding"/>
    <property type="evidence" value="ECO:0007669"/>
    <property type="project" value="UniProtKB-UniRule"/>
</dbReference>
<dbReference type="GO" id="GO:0071897">
    <property type="term" value="P:DNA biosynthetic process"/>
    <property type="evidence" value="ECO:0007669"/>
    <property type="project" value="UniProtKB-KW"/>
</dbReference>
<dbReference type="GO" id="GO:0046104">
    <property type="term" value="P:thymidine metabolic process"/>
    <property type="evidence" value="ECO:0007669"/>
    <property type="project" value="TreeGrafter"/>
</dbReference>
<dbReference type="FunFam" id="3.30.60.20:FF:000026">
    <property type="entry name" value="Thymidine kinase"/>
    <property type="match status" value="1"/>
</dbReference>
<dbReference type="FunFam" id="3.40.50.300:FF:000384">
    <property type="entry name" value="Thymidine kinase"/>
    <property type="match status" value="1"/>
</dbReference>
<dbReference type="Gene3D" id="3.30.60.20">
    <property type="match status" value="1"/>
</dbReference>
<dbReference type="Gene3D" id="3.40.50.300">
    <property type="entry name" value="P-loop containing nucleotide triphosphate hydrolases"/>
    <property type="match status" value="1"/>
</dbReference>
<dbReference type="HAMAP" id="MF_00124">
    <property type="entry name" value="Thymidine_kinase"/>
    <property type="match status" value="1"/>
</dbReference>
<dbReference type="InterPro" id="IPR027417">
    <property type="entry name" value="P-loop_NTPase"/>
</dbReference>
<dbReference type="InterPro" id="IPR001267">
    <property type="entry name" value="Thymidine_kinase"/>
</dbReference>
<dbReference type="InterPro" id="IPR020633">
    <property type="entry name" value="Thymidine_kinase_CS"/>
</dbReference>
<dbReference type="NCBIfam" id="NF003296">
    <property type="entry name" value="PRK04296.1-1"/>
    <property type="match status" value="1"/>
</dbReference>
<dbReference type="PANTHER" id="PTHR11441">
    <property type="entry name" value="THYMIDINE KINASE"/>
    <property type="match status" value="1"/>
</dbReference>
<dbReference type="PANTHER" id="PTHR11441:SF0">
    <property type="entry name" value="THYMIDINE KINASE, CYTOSOLIC"/>
    <property type="match status" value="1"/>
</dbReference>
<dbReference type="Pfam" id="PF00265">
    <property type="entry name" value="TK"/>
    <property type="match status" value="1"/>
</dbReference>
<dbReference type="PIRSF" id="PIRSF035805">
    <property type="entry name" value="TK_cell"/>
    <property type="match status" value="1"/>
</dbReference>
<dbReference type="SUPFAM" id="SSF57716">
    <property type="entry name" value="Glucocorticoid receptor-like (DNA-binding domain)"/>
    <property type="match status" value="1"/>
</dbReference>
<dbReference type="SUPFAM" id="SSF52540">
    <property type="entry name" value="P-loop containing nucleoside triphosphate hydrolases"/>
    <property type="match status" value="1"/>
</dbReference>
<dbReference type="PROSITE" id="PS00603">
    <property type="entry name" value="TK_CELLULAR_TYPE"/>
    <property type="match status" value="1"/>
</dbReference>
<sequence>MYLINQNGWIEVICGSMFSGKSEELIRRVRRTQFAKQHAIVFKPCIDNRYSEEDVVSHNGLKVKAVPVSASKDIFEHITEEMDVIAIDEVQFFDGDIVEVVQVLANRGYRVIVAGLDQDFRGLPFGQVPQLMAIAEHVTKLQAVCSACGSPASRTQRLIDGEPAAFDDPIILVGASESYEPRCRHCHVVPTNKDK</sequence>
<organism>
    <name type="scientific">Bacillus cereus (strain 03BB102)</name>
    <dbReference type="NCBI Taxonomy" id="572264"/>
    <lineage>
        <taxon>Bacteria</taxon>
        <taxon>Bacillati</taxon>
        <taxon>Bacillota</taxon>
        <taxon>Bacilli</taxon>
        <taxon>Bacillales</taxon>
        <taxon>Bacillaceae</taxon>
        <taxon>Bacillus</taxon>
        <taxon>Bacillus cereus group</taxon>
    </lineage>
</organism>
<proteinExistence type="inferred from homology"/>